<sequence>MEISYGRALWRNFLGQSPDWYKLALIIFLIVNPLVFAVAPFVAGWLLVVEFIFTLAMALKCYPLLPGGLLAIEALLIGMTSPAHVREEIAGNLEVLLLLMFMVAGIYFMKQLLLFVFTRLLLGIRSKMLLSLAFCLAAAFLSAFLDALTVVAVVISVAVGFYGIYHRVASARPDDSDLLNDSHIEQHYREVLEQFRGFLRSLMMHAGVGTALGGVMTMVGEPQNLIIAKAAGWHFGEFFLRMAPVTLPVMVCGLLTCLLVEKYRLFGYGEPLPPTVRKVLQEFDDRSRAQRSRQERLRLIAQALIGVWLIVALAFHLAEVGLIGLSVIILATTFTGVTDEHAIGKAFTEALPFTALLTVFFSIVAVIIDQQLFTPVIEFVLQASPHAQLSLFYLFNGLLSSISDNVFVGTVYINEAKAALEHGAISLPQFEMLAVAINTGTNLPSVATPNGQAAFLFLLTSALAPLIRLSYGRMVWMALPYTIVLTLVGLLCVEFTLMPVTDWLLAHGWLVTPTLP</sequence>
<reference key="1">
    <citation type="submission" date="2006-09" db="EMBL/GenBank/DDBJ databases">
        <authorList>
            <consortium name="The Klebsiella pneumonia Genome Sequencing Project"/>
            <person name="McClelland M."/>
            <person name="Sanderson E.K."/>
            <person name="Spieth J."/>
            <person name="Clifton W.S."/>
            <person name="Latreille P."/>
            <person name="Sabo A."/>
            <person name="Pepin K."/>
            <person name="Bhonagiri V."/>
            <person name="Porwollik S."/>
            <person name="Ali J."/>
            <person name="Wilson R.K."/>
        </authorList>
    </citation>
    <scope>NUCLEOTIDE SEQUENCE [LARGE SCALE GENOMIC DNA]</scope>
    <source>
        <strain>ATCC 700721 / MGH 78578</strain>
    </source>
</reference>
<feature type="chain" id="PRO_0000333098" description="Na(+)/H(+) antiporter NhaB">
    <location>
        <begin position="1"/>
        <end position="516"/>
    </location>
</feature>
<feature type="transmembrane region" description="Helical" evidence="1">
    <location>
        <begin position="23"/>
        <end position="43"/>
    </location>
</feature>
<feature type="transmembrane region" description="Helical" evidence="1">
    <location>
        <begin position="61"/>
        <end position="80"/>
    </location>
</feature>
<feature type="transmembrane region" description="Helical" evidence="1">
    <location>
        <begin position="97"/>
        <end position="117"/>
    </location>
</feature>
<feature type="transmembrane region" description="Helical" evidence="1">
    <location>
        <begin position="120"/>
        <end position="140"/>
    </location>
</feature>
<feature type="transmembrane region" description="Helical" evidence="1">
    <location>
        <begin position="144"/>
        <end position="164"/>
    </location>
</feature>
<feature type="transmembrane region" description="Helical" evidence="1">
    <location>
        <begin position="202"/>
        <end position="222"/>
    </location>
</feature>
<feature type="transmembrane region" description="Helical" evidence="1">
    <location>
        <begin position="238"/>
        <end position="258"/>
    </location>
</feature>
<feature type="transmembrane region" description="Helical" evidence="1">
    <location>
        <begin position="303"/>
        <end position="323"/>
    </location>
</feature>
<feature type="transmembrane region" description="Helical" evidence="1">
    <location>
        <begin position="348"/>
        <end position="368"/>
    </location>
</feature>
<feature type="transmembrane region" description="Helical" evidence="1">
    <location>
        <begin position="391"/>
        <end position="411"/>
    </location>
</feature>
<feature type="transmembrane region" description="Helical" evidence="1">
    <location>
        <begin position="447"/>
        <end position="467"/>
    </location>
</feature>
<feature type="transmembrane region" description="Helical" evidence="1">
    <location>
        <begin position="475"/>
        <end position="495"/>
    </location>
</feature>
<keyword id="KW-0050">Antiport</keyword>
<keyword id="KW-0997">Cell inner membrane</keyword>
<keyword id="KW-1003">Cell membrane</keyword>
<keyword id="KW-0406">Ion transport</keyword>
<keyword id="KW-0472">Membrane</keyword>
<keyword id="KW-0915">Sodium</keyword>
<keyword id="KW-0739">Sodium transport</keyword>
<keyword id="KW-0812">Transmembrane</keyword>
<keyword id="KW-1133">Transmembrane helix</keyword>
<keyword id="KW-0813">Transport</keyword>
<proteinExistence type="inferred from homology"/>
<protein>
    <recommendedName>
        <fullName evidence="1">Na(+)/H(+) antiporter NhaB</fullName>
    </recommendedName>
    <alternativeName>
        <fullName evidence="1">Sodium/proton antiporter NhaB</fullName>
    </alternativeName>
</protein>
<organism>
    <name type="scientific">Klebsiella pneumoniae subsp. pneumoniae (strain ATCC 700721 / MGH 78578)</name>
    <dbReference type="NCBI Taxonomy" id="272620"/>
    <lineage>
        <taxon>Bacteria</taxon>
        <taxon>Pseudomonadati</taxon>
        <taxon>Pseudomonadota</taxon>
        <taxon>Gammaproteobacteria</taxon>
        <taxon>Enterobacterales</taxon>
        <taxon>Enterobacteriaceae</taxon>
        <taxon>Klebsiella/Raoultella group</taxon>
        <taxon>Klebsiella</taxon>
        <taxon>Klebsiella pneumoniae complex</taxon>
    </lineage>
</organism>
<dbReference type="EMBL" id="CP000647">
    <property type="protein sequence ID" value="ABR77738.1"/>
    <property type="status" value="ALT_INIT"/>
    <property type="molecule type" value="Genomic_DNA"/>
</dbReference>
<dbReference type="RefSeq" id="WP_041937650.1">
    <property type="nucleotide sequence ID" value="NC_009648.1"/>
</dbReference>
<dbReference type="SMR" id="A6TAW7"/>
<dbReference type="STRING" id="272620.KPN_02312"/>
<dbReference type="PaxDb" id="272620-KPN_02312"/>
<dbReference type="EnsemblBacteria" id="ABR77738">
    <property type="protein sequence ID" value="ABR77738"/>
    <property type="gene ID" value="KPN_02312"/>
</dbReference>
<dbReference type="KEGG" id="kpn:KPN_02312"/>
<dbReference type="HOGENOM" id="CLU_041110_0_0_6"/>
<dbReference type="Proteomes" id="UP000000265">
    <property type="component" value="Chromosome"/>
</dbReference>
<dbReference type="GO" id="GO:0005886">
    <property type="term" value="C:plasma membrane"/>
    <property type="evidence" value="ECO:0007669"/>
    <property type="project" value="UniProtKB-SubCell"/>
</dbReference>
<dbReference type="GO" id="GO:0015385">
    <property type="term" value="F:sodium:proton antiporter activity"/>
    <property type="evidence" value="ECO:0007669"/>
    <property type="project" value="InterPro"/>
</dbReference>
<dbReference type="HAMAP" id="MF_01599">
    <property type="entry name" value="NhaB"/>
    <property type="match status" value="1"/>
</dbReference>
<dbReference type="InterPro" id="IPR004671">
    <property type="entry name" value="Na+/H+_antiporter_NhaB"/>
</dbReference>
<dbReference type="NCBIfam" id="TIGR00774">
    <property type="entry name" value="NhaB"/>
    <property type="match status" value="1"/>
</dbReference>
<dbReference type="NCBIfam" id="NF007093">
    <property type="entry name" value="PRK09547.1"/>
    <property type="match status" value="1"/>
</dbReference>
<dbReference type="PANTHER" id="PTHR43302:SF1">
    <property type="entry name" value="NA(+)_H(+) ANTIPORTER NHAB"/>
    <property type="match status" value="1"/>
</dbReference>
<dbReference type="PANTHER" id="PTHR43302">
    <property type="entry name" value="TRANSPORTER ARSB-RELATED"/>
    <property type="match status" value="1"/>
</dbReference>
<dbReference type="Pfam" id="PF06450">
    <property type="entry name" value="NhaB"/>
    <property type="match status" value="1"/>
</dbReference>
<comment type="function">
    <text evidence="1">Na(+)/H(+) antiporter that extrudes sodium in exchange for external protons.</text>
</comment>
<comment type="catalytic activity">
    <reaction evidence="1">
        <text>2 Na(+)(in) + 3 H(+)(out) = 2 Na(+)(out) + 3 H(+)(in)</text>
        <dbReference type="Rhea" id="RHEA:29247"/>
        <dbReference type="ChEBI" id="CHEBI:15378"/>
        <dbReference type="ChEBI" id="CHEBI:29101"/>
    </reaction>
    <physiologicalReaction direction="left-to-right" evidence="1">
        <dbReference type="Rhea" id="RHEA:29248"/>
    </physiologicalReaction>
</comment>
<comment type="subcellular location">
    <subcellularLocation>
        <location evidence="1">Cell inner membrane</location>
        <topology evidence="1">Multi-pass membrane protein</topology>
    </subcellularLocation>
</comment>
<comment type="similarity">
    <text evidence="1">Belongs to the NhaB Na(+)/H(+) (TC 2.A.34) antiporter family.</text>
</comment>
<comment type="sequence caution" evidence="2">
    <conflict type="erroneous initiation">
        <sequence resource="EMBL-CDS" id="ABR77738"/>
    </conflict>
</comment>
<gene>
    <name evidence="1" type="primary">nhaB</name>
    <name type="ordered locus">KPN78578_22770</name>
    <name type="ORF">KPN_02312</name>
</gene>
<evidence type="ECO:0000255" key="1">
    <source>
        <dbReference type="HAMAP-Rule" id="MF_01599"/>
    </source>
</evidence>
<evidence type="ECO:0000305" key="2"/>
<name>NHAB_KLEP7</name>
<accession>A6TAW7</accession>